<gene>
    <name evidence="1" type="primary">gcvPB</name>
    <name type="ordered locus">BT9727_3969</name>
</gene>
<comment type="function">
    <text evidence="1">The glycine cleavage system catalyzes the degradation of glycine. The P protein binds the alpha-amino group of glycine through its pyridoxal phosphate cofactor; CO(2) is released and the remaining methylamine moiety is then transferred to the lipoamide cofactor of the H protein.</text>
</comment>
<comment type="catalytic activity">
    <reaction evidence="1">
        <text>N(6)-[(R)-lipoyl]-L-lysyl-[glycine-cleavage complex H protein] + glycine + H(+) = N(6)-[(R)-S(8)-aminomethyldihydrolipoyl]-L-lysyl-[glycine-cleavage complex H protein] + CO2</text>
        <dbReference type="Rhea" id="RHEA:24304"/>
        <dbReference type="Rhea" id="RHEA-COMP:10494"/>
        <dbReference type="Rhea" id="RHEA-COMP:10495"/>
        <dbReference type="ChEBI" id="CHEBI:15378"/>
        <dbReference type="ChEBI" id="CHEBI:16526"/>
        <dbReference type="ChEBI" id="CHEBI:57305"/>
        <dbReference type="ChEBI" id="CHEBI:83099"/>
        <dbReference type="ChEBI" id="CHEBI:83143"/>
        <dbReference type="EC" id="1.4.4.2"/>
    </reaction>
</comment>
<comment type="cofactor">
    <cofactor evidence="1">
        <name>pyridoxal 5'-phosphate</name>
        <dbReference type="ChEBI" id="CHEBI:597326"/>
    </cofactor>
</comment>
<comment type="subunit">
    <text evidence="1">The glycine cleavage system is composed of four proteins: P, T, L and H. In this organism, the P 'protein' is a heterodimer of two subunits.</text>
</comment>
<comment type="similarity">
    <text evidence="1">Belongs to the GcvP family. C-terminal subunit subfamily.</text>
</comment>
<dbReference type="EC" id="1.4.4.2" evidence="1"/>
<dbReference type="EMBL" id="AE017355">
    <property type="protein sequence ID" value="AAT62841.1"/>
    <property type="molecule type" value="Genomic_DNA"/>
</dbReference>
<dbReference type="RefSeq" id="WP_000795698.1">
    <property type="nucleotide sequence ID" value="NC_005957.1"/>
</dbReference>
<dbReference type="RefSeq" id="YP_038288.1">
    <property type="nucleotide sequence ID" value="NC_005957.1"/>
</dbReference>
<dbReference type="SMR" id="Q6HDT8"/>
<dbReference type="GeneID" id="93006875"/>
<dbReference type="KEGG" id="btk:BT9727_3969"/>
<dbReference type="PATRIC" id="fig|281309.8.peg.4232"/>
<dbReference type="HOGENOM" id="CLU_004620_5_0_9"/>
<dbReference type="Proteomes" id="UP000001301">
    <property type="component" value="Chromosome"/>
</dbReference>
<dbReference type="GO" id="GO:0005829">
    <property type="term" value="C:cytosol"/>
    <property type="evidence" value="ECO:0007669"/>
    <property type="project" value="TreeGrafter"/>
</dbReference>
<dbReference type="GO" id="GO:0005960">
    <property type="term" value="C:glycine cleavage complex"/>
    <property type="evidence" value="ECO:0007669"/>
    <property type="project" value="TreeGrafter"/>
</dbReference>
<dbReference type="GO" id="GO:0016594">
    <property type="term" value="F:glycine binding"/>
    <property type="evidence" value="ECO:0007669"/>
    <property type="project" value="TreeGrafter"/>
</dbReference>
<dbReference type="GO" id="GO:0004375">
    <property type="term" value="F:glycine dehydrogenase (decarboxylating) activity"/>
    <property type="evidence" value="ECO:0007669"/>
    <property type="project" value="UniProtKB-EC"/>
</dbReference>
<dbReference type="GO" id="GO:0030170">
    <property type="term" value="F:pyridoxal phosphate binding"/>
    <property type="evidence" value="ECO:0007669"/>
    <property type="project" value="TreeGrafter"/>
</dbReference>
<dbReference type="GO" id="GO:0019464">
    <property type="term" value="P:glycine decarboxylation via glycine cleavage system"/>
    <property type="evidence" value="ECO:0007669"/>
    <property type="project" value="UniProtKB-UniRule"/>
</dbReference>
<dbReference type="CDD" id="cd00613">
    <property type="entry name" value="GDC-P"/>
    <property type="match status" value="1"/>
</dbReference>
<dbReference type="FunFam" id="3.40.640.10:FF:000034">
    <property type="entry name" value="Probable glycine dehydrogenase (decarboxylating) subunit 2"/>
    <property type="match status" value="1"/>
</dbReference>
<dbReference type="FunFam" id="3.90.1150.10:FF:000014">
    <property type="entry name" value="Probable glycine dehydrogenase (decarboxylating) subunit 2"/>
    <property type="match status" value="1"/>
</dbReference>
<dbReference type="Gene3D" id="6.20.440.10">
    <property type="match status" value="1"/>
</dbReference>
<dbReference type="Gene3D" id="3.90.1150.10">
    <property type="entry name" value="Aspartate Aminotransferase, domain 1"/>
    <property type="match status" value="1"/>
</dbReference>
<dbReference type="Gene3D" id="3.40.640.10">
    <property type="entry name" value="Type I PLP-dependent aspartate aminotransferase-like (Major domain)"/>
    <property type="match status" value="1"/>
</dbReference>
<dbReference type="HAMAP" id="MF_00713">
    <property type="entry name" value="GcvPB"/>
    <property type="match status" value="1"/>
</dbReference>
<dbReference type="InterPro" id="IPR023012">
    <property type="entry name" value="GcvPB"/>
</dbReference>
<dbReference type="InterPro" id="IPR049316">
    <property type="entry name" value="GDC-P_C"/>
</dbReference>
<dbReference type="InterPro" id="IPR049315">
    <property type="entry name" value="GDC-P_N"/>
</dbReference>
<dbReference type="InterPro" id="IPR020581">
    <property type="entry name" value="GDC_P"/>
</dbReference>
<dbReference type="InterPro" id="IPR015424">
    <property type="entry name" value="PyrdxlP-dep_Trfase"/>
</dbReference>
<dbReference type="InterPro" id="IPR015421">
    <property type="entry name" value="PyrdxlP-dep_Trfase_major"/>
</dbReference>
<dbReference type="InterPro" id="IPR015422">
    <property type="entry name" value="PyrdxlP-dep_Trfase_small"/>
</dbReference>
<dbReference type="NCBIfam" id="NF003346">
    <property type="entry name" value="PRK04366.1"/>
    <property type="match status" value="1"/>
</dbReference>
<dbReference type="PANTHER" id="PTHR11773:SF1">
    <property type="entry name" value="GLYCINE DEHYDROGENASE (DECARBOXYLATING), MITOCHONDRIAL"/>
    <property type="match status" value="1"/>
</dbReference>
<dbReference type="PANTHER" id="PTHR11773">
    <property type="entry name" value="GLYCINE DEHYDROGENASE, DECARBOXYLATING"/>
    <property type="match status" value="1"/>
</dbReference>
<dbReference type="Pfam" id="PF21478">
    <property type="entry name" value="GcvP2_C"/>
    <property type="match status" value="1"/>
</dbReference>
<dbReference type="Pfam" id="PF02347">
    <property type="entry name" value="GDC-P"/>
    <property type="match status" value="1"/>
</dbReference>
<dbReference type="SUPFAM" id="SSF53383">
    <property type="entry name" value="PLP-dependent transferases"/>
    <property type="match status" value="1"/>
</dbReference>
<protein>
    <recommendedName>
        <fullName evidence="1">Probable glycine dehydrogenase (decarboxylating) subunit 2</fullName>
        <ecNumber evidence="1">1.4.4.2</ecNumber>
    </recommendedName>
    <alternativeName>
        <fullName evidence="1">Glycine cleavage system P-protein subunit 2</fullName>
    </alternativeName>
    <alternativeName>
        <fullName evidence="1">Glycine decarboxylase subunit 2</fullName>
    </alternativeName>
    <alternativeName>
        <fullName evidence="1">Glycine dehydrogenase (aminomethyl-transferring) subunit 2</fullName>
    </alternativeName>
</protein>
<reference key="1">
    <citation type="journal article" date="2006" name="J. Bacteriol.">
        <title>Pathogenomic sequence analysis of Bacillus cereus and Bacillus thuringiensis isolates closely related to Bacillus anthracis.</title>
        <authorList>
            <person name="Han C.S."/>
            <person name="Xie G."/>
            <person name="Challacombe J.F."/>
            <person name="Altherr M.R."/>
            <person name="Bhotika S.S."/>
            <person name="Bruce D."/>
            <person name="Campbell C.S."/>
            <person name="Campbell M.L."/>
            <person name="Chen J."/>
            <person name="Chertkov O."/>
            <person name="Cleland C."/>
            <person name="Dimitrijevic M."/>
            <person name="Doggett N.A."/>
            <person name="Fawcett J.J."/>
            <person name="Glavina T."/>
            <person name="Goodwin L.A."/>
            <person name="Hill K.K."/>
            <person name="Hitchcock P."/>
            <person name="Jackson P.J."/>
            <person name="Keim P."/>
            <person name="Kewalramani A.R."/>
            <person name="Longmire J."/>
            <person name="Lucas S."/>
            <person name="Malfatti S."/>
            <person name="McMurry K."/>
            <person name="Meincke L.J."/>
            <person name="Misra M."/>
            <person name="Moseman B.L."/>
            <person name="Mundt M."/>
            <person name="Munk A.C."/>
            <person name="Okinaka R.T."/>
            <person name="Parson-Quintana B."/>
            <person name="Reilly L.P."/>
            <person name="Richardson P."/>
            <person name="Robinson D.L."/>
            <person name="Rubin E."/>
            <person name="Saunders E."/>
            <person name="Tapia R."/>
            <person name="Tesmer J.G."/>
            <person name="Thayer N."/>
            <person name="Thompson L.S."/>
            <person name="Tice H."/>
            <person name="Ticknor L.O."/>
            <person name="Wills P.L."/>
            <person name="Brettin T.S."/>
            <person name="Gilna P."/>
        </authorList>
    </citation>
    <scope>NUCLEOTIDE SEQUENCE [LARGE SCALE GENOMIC DNA]</scope>
    <source>
        <strain>97-27</strain>
    </source>
</reference>
<organism>
    <name type="scientific">Bacillus thuringiensis subsp. konkukian (strain 97-27)</name>
    <dbReference type="NCBI Taxonomy" id="281309"/>
    <lineage>
        <taxon>Bacteria</taxon>
        <taxon>Bacillati</taxon>
        <taxon>Bacillota</taxon>
        <taxon>Bacilli</taxon>
        <taxon>Bacillales</taxon>
        <taxon>Bacillaceae</taxon>
        <taxon>Bacillus</taxon>
        <taxon>Bacillus cereus group</taxon>
    </lineage>
</organism>
<name>GCSPB_BACHK</name>
<sequence length="491" mass="54865">MKNQDQALIFEVSKEGRIGYSLPKLDVEEVKLEDVFESDYIRVEDAELPEVSELDIMRHYTALSNRNHGVDSGFYPLGSCTMKYNPKINESVARFAGFANIHPLQDEKTVQGAMELMYDLQEHLIEITGMDTVTLQPAAGAHGEWTGLMLIRAYHEANGDFNRTKVIVPDSAHGTNPASATVAGFETITVKSNEHGLVDLEDLKRVVNEETAALMLTNPNTLGLFEENILEMAEIVHNAGGKLYYDGANLNAVLSQARPGDMGFDVVHLNLHKTFTGPHGGGGPGSGPVGVKADLIPYLPKPILEKTENGYHFNYDRPEAIGRVKPFYGNFGINVRAYTYIRSMGPDGLRAVTEYAVLNANYMMRRLAPFYDLPFDRHCKHEFVLSGRRQKKLGVRTLDIAKRLLDFGYHPPTIYFPLNVEECIMIEPTETESKETLDGFIDKMIQIAKEVEENPEVVQEAPHTTVIKRLDETMAARKPVLRYAKPAPVQV</sequence>
<proteinExistence type="inferred from homology"/>
<accession>Q6HDT8</accession>
<evidence type="ECO:0000255" key="1">
    <source>
        <dbReference type="HAMAP-Rule" id="MF_00713"/>
    </source>
</evidence>
<keyword id="KW-0560">Oxidoreductase</keyword>
<keyword id="KW-0663">Pyridoxal phosphate</keyword>
<feature type="chain" id="PRO_0000166999" description="Probable glycine dehydrogenase (decarboxylating) subunit 2">
    <location>
        <begin position="1"/>
        <end position="491"/>
    </location>
</feature>
<feature type="modified residue" description="N6-(pyridoxal phosphate)lysine" evidence="1">
    <location>
        <position position="273"/>
    </location>
</feature>